<proteinExistence type="inferred from homology"/>
<protein>
    <recommendedName>
        <fullName evidence="1">Large ribosomal subunit protein bL35</fullName>
    </recommendedName>
    <alternativeName>
        <fullName evidence="2">50S ribosomal protein L35</fullName>
    </alternativeName>
</protein>
<sequence length="66" mass="7455">MPKLKTKSGAKKRFKVTGTGKVVSAHAGKRHGMIKRTKKQIRQLRGTRTLFKTDGDNIKQYFLPNA</sequence>
<organism>
    <name type="scientific">Afipia carboxidovorans (strain ATCC 49405 / DSM 1227 / KCTC 32145 / OM5)</name>
    <name type="common">Oligotropha carboxidovorans</name>
    <dbReference type="NCBI Taxonomy" id="504832"/>
    <lineage>
        <taxon>Bacteria</taxon>
        <taxon>Pseudomonadati</taxon>
        <taxon>Pseudomonadota</taxon>
        <taxon>Alphaproteobacteria</taxon>
        <taxon>Hyphomicrobiales</taxon>
        <taxon>Nitrobacteraceae</taxon>
        <taxon>Afipia</taxon>
    </lineage>
</organism>
<keyword id="KW-1185">Reference proteome</keyword>
<keyword id="KW-0687">Ribonucleoprotein</keyword>
<keyword id="KW-0689">Ribosomal protein</keyword>
<name>RL35_AFIC5</name>
<gene>
    <name evidence="1" type="primary">rpmI</name>
    <name type="ordered locus">OCAR_4441</name>
    <name type="ordered locus">OCA5_c00900</name>
</gene>
<accession>B6JCK7</accession>
<accession>F8C0C3</accession>
<dbReference type="EMBL" id="CP001196">
    <property type="protein sequence ID" value="ACI91587.1"/>
    <property type="molecule type" value="Genomic_DNA"/>
</dbReference>
<dbReference type="EMBL" id="CP002826">
    <property type="protein sequence ID" value="AEI04822.1"/>
    <property type="molecule type" value="Genomic_DNA"/>
</dbReference>
<dbReference type="RefSeq" id="WP_012561618.1">
    <property type="nucleotide sequence ID" value="NC_015684.1"/>
</dbReference>
<dbReference type="SMR" id="B6JCK7"/>
<dbReference type="STRING" id="504832.OCA5_c00900"/>
<dbReference type="KEGG" id="oca:OCAR_4441"/>
<dbReference type="KEGG" id="ocg:OCA5_c00900"/>
<dbReference type="PATRIC" id="fig|504832.7.peg.96"/>
<dbReference type="eggNOG" id="COG0291">
    <property type="taxonomic scope" value="Bacteria"/>
</dbReference>
<dbReference type="HOGENOM" id="CLU_169643_2_1_5"/>
<dbReference type="OrthoDB" id="9804851at2"/>
<dbReference type="Proteomes" id="UP000007730">
    <property type="component" value="Chromosome"/>
</dbReference>
<dbReference type="GO" id="GO:0022625">
    <property type="term" value="C:cytosolic large ribosomal subunit"/>
    <property type="evidence" value="ECO:0007669"/>
    <property type="project" value="TreeGrafter"/>
</dbReference>
<dbReference type="GO" id="GO:0003735">
    <property type="term" value="F:structural constituent of ribosome"/>
    <property type="evidence" value="ECO:0007669"/>
    <property type="project" value="InterPro"/>
</dbReference>
<dbReference type="GO" id="GO:0006412">
    <property type="term" value="P:translation"/>
    <property type="evidence" value="ECO:0007669"/>
    <property type="project" value="UniProtKB-UniRule"/>
</dbReference>
<dbReference type="FunFam" id="4.10.410.60:FF:000001">
    <property type="entry name" value="50S ribosomal protein L35"/>
    <property type="match status" value="1"/>
</dbReference>
<dbReference type="Gene3D" id="4.10.410.60">
    <property type="match status" value="1"/>
</dbReference>
<dbReference type="HAMAP" id="MF_00514">
    <property type="entry name" value="Ribosomal_bL35"/>
    <property type="match status" value="1"/>
</dbReference>
<dbReference type="InterPro" id="IPR001706">
    <property type="entry name" value="Ribosomal_bL35"/>
</dbReference>
<dbReference type="InterPro" id="IPR021137">
    <property type="entry name" value="Ribosomal_bL35-like"/>
</dbReference>
<dbReference type="InterPro" id="IPR018265">
    <property type="entry name" value="Ribosomal_bL35_CS"/>
</dbReference>
<dbReference type="InterPro" id="IPR037229">
    <property type="entry name" value="Ribosomal_bL35_sf"/>
</dbReference>
<dbReference type="NCBIfam" id="TIGR00001">
    <property type="entry name" value="rpmI_bact"/>
    <property type="match status" value="1"/>
</dbReference>
<dbReference type="PANTHER" id="PTHR33343">
    <property type="entry name" value="54S RIBOSOMAL PROTEIN BL35M"/>
    <property type="match status" value="1"/>
</dbReference>
<dbReference type="PANTHER" id="PTHR33343:SF1">
    <property type="entry name" value="LARGE RIBOSOMAL SUBUNIT PROTEIN BL35M"/>
    <property type="match status" value="1"/>
</dbReference>
<dbReference type="Pfam" id="PF01632">
    <property type="entry name" value="Ribosomal_L35p"/>
    <property type="match status" value="1"/>
</dbReference>
<dbReference type="PRINTS" id="PR00064">
    <property type="entry name" value="RIBOSOMALL35"/>
</dbReference>
<dbReference type="SUPFAM" id="SSF143034">
    <property type="entry name" value="L35p-like"/>
    <property type="match status" value="1"/>
</dbReference>
<dbReference type="PROSITE" id="PS00936">
    <property type="entry name" value="RIBOSOMAL_L35"/>
    <property type="match status" value="1"/>
</dbReference>
<evidence type="ECO:0000255" key="1">
    <source>
        <dbReference type="HAMAP-Rule" id="MF_00514"/>
    </source>
</evidence>
<evidence type="ECO:0000305" key="2"/>
<comment type="similarity">
    <text evidence="1">Belongs to the bacterial ribosomal protein bL35 family.</text>
</comment>
<reference key="1">
    <citation type="journal article" date="2008" name="J. Bacteriol.">
        <title>Genome sequence of the chemolithoautotrophic bacterium Oligotropha carboxidovorans OM5T.</title>
        <authorList>
            <person name="Paul D."/>
            <person name="Bridges S."/>
            <person name="Burgess S.C."/>
            <person name="Dandass Y."/>
            <person name="Lawrence M.L."/>
        </authorList>
    </citation>
    <scope>NUCLEOTIDE SEQUENCE [LARGE SCALE GENOMIC DNA]</scope>
    <source>
        <strain>ATCC 49405 / DSM 1227 / KCTC 32145 / OM5</strain>
    </source>
</reference>
<reference key="2">
    <citation type="journal article" date="2011" name="J. Bacteriol.">
        <title>Complete genome sequences of the chemolithoautotrophic Oligotropha carboxidovorans strains OM4 and OM5.</title>
        <authorList>
            <person name="Volland S."/>
            <person name="Rachinger M."/>
            <person name="Strittmatter A."/>
            <person name="Daniel R."/>
            <person name="Gottschalk G."/>
            <person name="Meyer O."/>
        </authorList>
    </citation>
    <scope>NUCLEOTIDE SEQUENCE [LARGE SCALE GENOMIC DNA]</scope>
    <source>
        <strain>ATCC 49405 / DSM 1227 / KCTC 32145 / OM5</strain>
    </source>
</reference>
<feature type="chain" id="PRO_1000127384" description="Large ribosomal subunit protein bL35">
    <location>
        <begin position="1"/>
        <end position="66"/>
    </location>
</feature>